<proteinExistence type="inferred from homology"/>
<dbReference type="EC" id="7.4.2.11" evidence="1"/>
<dbReference type="EMBL" id="CR628336">
    <property type="protein sequence ID" value="CAH12948.1"/>
    <property type="molecule type" value="Genomic_DNA"/>
</dbReference>
<dbReference type="RefSeq" id="WP_011214087.1">
    <property type="nucleotide sequence ID" value="NC_006368.1"/>
</dbReference>
<dbReference type="SMR" id="Q5X484"/>
<dbReference type="KEGG" id="lpp:lpp1796"/>
<dbReference type="LegioList" id="lpp1796"/>
<dbReference type="HOGENOM" id="CLU_000604_1_3_6"/>
<dbReference type="GO" id="GO:0005886">
    <property type="term" value="C:plasma membrane"/>
    <property type="evidence" value="ECO:0007669"/>
    <property type="project" value="UniProtKB-SubCell"/>
</dbReference>
<dbReference type="GO" id="GO:0033232">
    <property type="term" value="F:ABC-type D-methionine transporter activity"/>
    <property type="evidence" value="ECO:0007669"/>
    <property type="project" value="UniProtKB-EC"/>
</dbReference>
<dbReference type="GO" id="GO:0005524">
    <property type="term" value="F:ATP binding"/>
    <property type="evidence" value="ECO:0007669"/>
    <property type="project" value="UniProtKB-KW"/>
</dbReference>
<dbReference type="GO" id="GO:0016887">
    <property type="term" value="F:ATP hydrolysis activity"/>
    <property type="evidence" value="ECO:0007669"/>
    <property type="project" value="InterPro"/>
</dbReference>
<dbReference type="CDD" id="cd03258">
    <property type="entry name" value="ABC_MetN_methionine_transporter"/>
    <property type="match status" value="1"/>
</dbReference>
<dbReference type="FunFam" id="3.40.50.300:FF:000056">
    <property type="entry name" value="Cell division ATP-binding protein FtsE"/>
    <property type="match status" value="1"/>
</dbReference>
<dbReference type="Gene3D" id="3.30.70.260">
    <property type="match status" value="1"/>
</dbReference>
<dbReference type="Gene3D" id="3.40.50.300">
    <property type="entry name" value="P-loop containing nucleotide triphosphate hydrolases"/>
    <property type="match status" value="1"/>
</dbReference>
<dbReference type="InterPro" id="IPR003593">
    <property type="entry name" value="AAA+_ATPase"/>
</dbReference>
<dbReference type="InterPro" id="IPR003439">
    <property type="entry name" value="ABC_transporter-like_ATP-bd"/>
</dbReference>
<dbReference type="InterPro" id="IPR017871">
    <property type="entry name" value="ABC_transporter-like_CS"/>
</dbReference>
<dbReference type="InterPro" id="IPR045865">
    <property type="entry name" value="ACT-like_dom_sf"/>
</dbReference>
<dbReference type="InterPro" id="IPR041701">
    <property type="entry name" value="MetN_ABC"/>
</dbReference>
<dbReference type="InterPro" id="IPR050086">
    <property type="entry name" value="MetN_ABC_transporter-like"/>
</dbReference>
<dbReference type="InterPro" id="IPR018449">
    <property type="entry name" value="NIL_domain"/>
</dbReference>
<dbReference type="InterPro" id="IPR027417">
    <property type="entry name" value="P-loop_NTPase"/>
</dbReference>
<dbReference type="PANTHER" id="PTHR43166">
    <property type="entry name" value="AMINO ACID IMPORT ATP-BINDING PROTEIN"/>
    <property type="match status" value="1"/>
</dbReference>
<dbReference type="PANTHER" id="PTHR43166:SF30">
    <property type="entry name" value="METHIONINE IMPORT ATP-BINDING PROTEIN METN"/>
    <property type="match status" value="1"/>
</dbReference>
<dbReference type="Pfam" id="PF00005">
    <property type="entry name" value="ABC_tran"/>
    <property type="match status" value="1"/>
</dbReference>
<dbReference type="Pfam" id="PF09383">
    <property type="entry name" value="NIL"/>
    <property type="match status" value="1"/>
</dbReference>
<dbReference type="SMART" id="SM00382">
    <property type="entry name" value="AAA"/>
    <property type="match status" value="1"/>
</dbReference>
<dbReference type="SMART" id="SM00930">
    <property type="entry name" value="NIL"/>
    <property type="match status" value="1"/>
</dbReference>
<dbReference type="SUPFAM" id="SSF55021">
    <property type="entry name" value="ACT-like"/>
    <property type="match status" value="1"/>
</dbReference>
<dbReference type="SUPFAM" id="SSF52540">
    <property type="entry name" value="P-loop containing nucleoside triphosphate hydrolases"/>
    <property type="match status" value="1"/>
</dbReference>
<dbReference type="PROSITE" id="PS00211">
    <property type="entry name" value="ABC_TRANSPORTER_1"/>
    <property type="match status" value="1"/>
</dbReference>
<dbReference type="PROSITE" id="PS50893">
    <property type="entry name" value="ABC_TRANSPORTER_2"/>
    <property type="match status" value="1"/>
</dbReference>
<dbReference type="PROSITE" id="PS51264">
    <property type="entry name" value="METN"/>
    <property type="match status" value="1"/>
</dbReference>
<gene>
    <name evidence="1" type="primary">metN</name>
    <name type="ordered locus">lpp1796</name>
</gene>
<comment type="function">
    <text evidence="1">Part of the ABC transporter complex MetNIQ involved in methionine import. Responsible for energy coupling to the transport system.</text>
</comment>
<comment type="catalytic activity">
    <reaction evidence="1">
        <text>L-methionine(out) + ATP + H2O = L-methionine(in) + ADP + phosphate + H(+)</text>
        <dbReference type="Rhea" id="RHEA:29779"/>
        <dbReference type="ChEBI" id="CHEBI:15377"/>
        <dbReference type="ChEBI" id="CHEBI:15378"/>
        <dbReference type="ChEBI" id="CHEBI:30616"/>
        <dbReference type="ChEBI" id="CHEBI:43474"/>
        <dbReference type="ChEBI" id="CHEBI:57844"/>
        <dbReference type="ChEBI" id="CHEBI:456216"/>
        <dbReference type="EC" id="7.4.2.11"/>
    </reaction>
</comment>
<comment type="catalytic activity">
    <reaction evidence="1">
        <text>D-methionine(out) + ATP + H2O = D-methionine(in) + ADP + phosphate + H(+)</text>
        <dbReference type="Rhea" id="RHEA:29767"/>
        <dbReference type="ChEBI" id="CHEBI:15377"/>
        <dbReference type="ChEBI" id="CHEBI:15378"/>
        <dbReference type="ChEBI" id="CHEBI:30616"/>
        <dbReference type="ChEBI" id="CHEBI:43474"/>
        <dbReference type="ChEBI" id="CHEBI:57932"/>
        <dbReference type="ChEBI" id="CHEBI:456216"/>
        <dbReference type="EC" id="7.4.2.11"/>
    </reaction>
</comment>
<comment type="subunit">
    <text evidence="1">The complex is composed of two ATP-binding proteins (MetN), two transmembrane proteins (MetI) and a solute-binding protein (MetQ).</text>
</comment>
<comment type="subcellular location">
    <subcellularLocation>
        <location evidence="1">Cell inner membrane</location>
        <topology evidence="1">Peripheral membrane protein</topology>
    </subcellularLocation>
</comment>
<comment type="similarity">
    <text evidence="1">Belongs to the ABC transporter superfamily. Methionine importer (TC 3.A.1.24) family.</text>
</comment>
<organism>
    <name type="scientific">Legionella pneumophila (strain Paris)</name>
    <dbReference type="NCBI Taxonomy" id="297246"/>
    <lineage>
        <taxon>Bacteria</taxon>
        <taxon>Pseudomonadati</taxon>
        <taxon>Pseudomonadota</taxon>
        <taxon>Gammaproteobacteria</taxon>
        <taxon>Legionellales</taxon>
        <taxon>Legionellaceae</taxon>
        <taxon>Legionella</taxon>
    </lineage>
</organism>
<feature type="chain" id="PRO_0000270323" description="Methionine import ATP-binding protein MetN">
    <location>
        <begin position="1"/>
        <end position="341"/>
    </location>
</feature>
<feature type="domain" description="ABC transporter" evidence="1">
    <location>
        <begin position="2"/>
        <end position="237"/>
    </location>
</feature>
<feature type="binding site" evidence="1">
    <location>
        <begin position="34"/>
        <end position="41"/>
    </location>
    <ligand>
        <name>ATP</name>
        <dbReference type="ChEBI" id="CHEBI:30616"/>
    </ligand>
</feature>
<protein>
    <recommendedName>
        <fullName evidence="1">Methionine import ATP-binding protein MetN</fullName>
        <ecNumber evidence="1">7.4.2.11</ecNumber>
    </recommendedName>
</protein>
<name>METN_LEGPA</name>
<sequence>MIELCGLKKSFSGKLALNDINLFIQEGEIFGVIGKSGAGKSTLLRCINILEKPDEGEVIIDGQNLMSLSRKNLALARHKIAMIFQHFNLLNSKTVFDNIALPMRIQGIDEELIKQKIEELLPVVELTDKKDAFPSQLSGGQKQRVAIARALSCSPKVLLCDEATSALDPATTDAILSLLKKINELYGITIVLITHEMDVVKRICQRLSVMVDGKIVETTALSNIFNKPESLARKMLYAQISPELPTCLTRRLADYATEKPLVRLFFQGEEATVPFISQTSRELNMDINILLANIDRFDGVTCGVLVVELTANPLLLEAFINRCEQAGITVEVLGYVLPDGL</sequence>
<reference key="1">
    <citation type="journal article" date="2004" name="Nat. Genet.">
        <title>Evidence in the Legionella pneumophila genome for exploitation of host cell functions and high genome plasticity.</title>
        <authorList>
            <person name="Cazalet C."/>
            <person name="Rusniok C."/>
            <person name="Brueggemann H."/>
            <person name="Zidane N."/>
            <person name="Magnier A."/>
            <person name="Ma L."/>
            <person name="Tichit M."/>
            <person name="Jarraud S."/>
            <person name="Bouchier C."/>
            <person name="Vandenesch F."/>
            <person name="Kunst F."/>
            <person name="Etienne J."/>
            <person name="Glaser P."/>
            <person name="Buchrieser C."/>
        </authorList>
    </citation>
    <scope>NUCLEOTIDE SEQUENCE [LARGE SCALE GENOMIC DNA]</scope>
    <source>
        <strain>Paris</strain>
    </source>
</reference>
<accession>Q5X484</accession>
<evidence type="ECO:0000255" key="1">
    <source>
        <dbReference type="HAMAP-Rule" id="MF_01719"/>
    </source>
</evidence>
<keyword id="KW-0029">Amino-acid transport</keyword>
<keyword id="KW-0067">ATP-binding</keyword>
<keyword id="KW-0997">Cell inner membrane</keyword>
<keyword id="KW-1003">Cell membrane</keyword>
<keyword id="KW-0472">Membrane</keyword>
<keyword id="KW-0547">Nucleotide-binding</keyword>
<keyword id="KW-1278">Translocase</keyword>
<keyword id="KW-0813">Transport</keyword>